<evidence type="ECO:0000255" key="1">
    <source>
        <dbReference type="HAMAP-Rule" id="MF_04025"/>
    </source>
</evidence>
<evidence type="ECO:0000256" key="2">
    <source>
        <dbReference type="SAM" id="MobiDB-lite"/>
    </source>
</evidence>
<organismHost>
    <name type="scientific">Homo sapiens</name>
    <name type="common">Human</name>
    <dbReference type="NCBI Taxonomy" id="9606"/>
</organismHost>
<feature type="chain" id="PRO_0000406178" description="Capsid vertex component 2">
    <location>
        <begin position="1"/>
        <end position="585"/>
    </location>
</feature>
<feature type="region of interest" description="Interaction with major capsid protein/MCP" evidence="1">
    <location>
        <begin position="1"/>
        <end position="49"/>
    </location>
</feature>
<feature type="region of interest" description="Disordered" evidence="2">
    <location>
        <begin position="109"/>
        <end position="138"/>
    </location>
</feature>
<feature type="compositionally biased region" description="Basic and acidic residues" evidence="2">
    <location>
        <begin position="112"/>
        <end position="123"/>
    </location>
</feature>
<feature type="compositionally biased region" description="Low complexity" evidence="2">
    <location>
        <begin position="125"/>
        <end position="138"/>
    </location>
</feature>
<gene>
    <name evidence="1" type="primary">CVC2</name>
    <name type="ordered locus">UL25</name>
</gene>
<comment type="function">
    <text evidence="1">Capsid vertex-specific component that plays a role during viral DNA encapsidation, assuring correct genome cleavage and presumably stabilizing capsids that contain full-length viral genomes. Participates in the interaction between the capsid and the tegument through interaction with the large tegument protein/LTP.</text>
</comment>
<comment type="subunit">
    <text evidence="1">Heterodimerizes with CVC1. Interacts with major capsid protein/MCP and triplex capsid protein 1/TRX1 at the pentamer vertices. Interacts with the large tegument protein/LTP.</text>
</comment>
<comment type="subcellular location">
    <subcellularLocation>
        <location evidence="1">Virion</location>
    </subcellularLocation>
    <subcellularLocation>
        <location evidence="1">Host nucleus</location>
    </subcellularLocation>
</comment>
<comment type="similarity">
    <text evidence="1">Belongs to the herpesviridae CVC2 protein family.</text>
</comment>
<protein>
    <recommendedName>
        <fullName evidence="1">Capsid vertex component 2</fullName>
    </recommendedName>
</protein>
<accession>P89448</accession>
<name>CVC2_HHV2H</name>
<sequence>MDPYYPFDALDVWEHRRFIVADSRSFITPEFPRDFWMLPVFNIPRETAAERAAVLQAQRTAAAAALENAALQAAELPVDIERRIRPIEQQVHHIADALEALETAAAAAEEADAARDAEARGEGAADGAAPSPTAGPAAAEMEVQIVRNDPPLRYDTNLPVDLLHMVYAGRGAAGSSGVVFGTWYRTIQERTIADFPLTTRSADFRDGRMSKTFMTALVLSLQSCGRLYVGQRHYSAFECAVLCLYLLYRTTHESSPDRDRAPVAFGDLLARLPRYLARLAAVIGDESGRPQYRYRDDKLPKAQFAAAGGRYEHGALATHVVIATLVRHGVLPAAPGDVPRDTSTRVNPDDVAHRDDVNRAAAAFLARGHNLFLWEDQTLLRATANTITALAVLRRLLANGNVYADRLDNRLQLGMLIPGAVPAEAIARGASGLDSGAIKSGDNNLEALCVNYVLPLYQADPTVELTQLFPGLAALCLDAQAGRPLASTRRVVDMSSGARQAALVRLTALELINRTRTNTTPVGEIINAHDALGIQYEQGPGLLAQQARIGLASNTKRFATFNVGSDYDLLYFLCLGFIPQYLSVA</sequence>
<proteinExistence type="evidence at protein level"/>
<organism>
    <name type="scientific">Human herpesvirus 2 (strain HG52)</name>
    <name type="common">HHV-2</name>
    <name type="synonym">Human herpes simplex virus 2</name>
    <dbReference type="NCBI Taxonomy" id="10315"/>
    <lineage>
        <taxon>Viruses</taxon>
        <taxon>Duplodnaviria</taxon>
        <taxon>Heunggongvirae</taxon>
        <taxon>Peploviricota</taxon>
        <taxon>Herviviricetes</taxon>
        <taxon>Herpesvirales</taxon>
        <taxon>Orthoherpesviridae</taxon>
        <taxon>Alphaherpesvirinae</taxon>
        <taxon>Simplexvirus</taxon>
        <taxon>Simplexvirus humanalpha2</taxon>
        <taxon>Human herpesvirus 2</taxon>
    </lineage>
</organism>
<dbReference type="EMBL" id="Z86099">
    <property type="protein sequence ID" value="CAB06749.1"/>
    <property type="molecule type" value="Genomic_DNA"/>
</dbReference>
<dbReference type="PDB" id="6M6G">
    <property type="method" value="EM"/>
    <property type="resolution" value="5.39 A"/>
    <property type="chains" value="l/m=1-585"/>
</dbReference>
<dbReference type="PDB" id="6M6H">
    <property type="method" value="EM"/>
    <property type="resolution" value="4.50 A"/>
    <property type="chains" value="H/I=1-585"/>
</dbReference>
<dbReference type="PDBsum" id="6M6G"/>
<dbReference type="PDBsum" id="6M6H"/>
<dbReference type="EMDB" id="EMD-30123"/>
<dbReference type="EMDB" id="EMD-30124"/>
<dbReference type="SMR" id="P89448"/>
<dbReference type="Proteomes" id="UP000001874">
    <property type="component" value="Segment"/>
</dbReference>
<dbReference type="GO" id="GO:0043657">
    <property type="term" value="C:host cell"/>
    <property type="evidence" value="ECO:0007669"/>
    <property type="project" value="GOC"/>
</dbReference>
<dbReference type="GO" id="GO:0042025">
    <property type="term" value="C:host cell nucleus"/>
    <property type="evidence" value="ECO:0007669"/>
    <property type="project" value="UniProtKB-SubCell"/>
</dbReference>
<dbReference type="GO" id="GO:0019028">
    <property type="term" value="C:viral capsid"/>
    <property type="evidence" value="ECO:0007669"/>
    <property type="project" value="UniProtKB-KW"/>
</dbReference>
<dbReference type="GO" id="GO:0046718">
    <property type="term" value="P:symbiont entry into host cell"/>
    <property type="evidence" value="ECO:0007669"/>
    <property type="project" value="UniProtKB-KW"/>
</dbReference>
<dbReference type="GO" id="GO:0019072">
    <property type="term" value="P:viral genome packaging"/>
    <property type="evidence" value="ECO:0007669"/>
    <property type="project" value="InterPro"/>
</dbReference>
<dbReference type="GO" id="GO:0075732">
    <property type="term" value="P:viral penetration into host nucleus"/>
    <property type="evidence" value="ECO:0007669"/>
    <property type="project" value="UniProtKB-KW"/>
</dbReference>
<dbReference type="HAMAP" id="MF_04025">
    <property type="entry name" value="HSV_CVC2"/>
    <property type="match status" value="1"/>
</dbReference>
<dbReference type="InterPro" id="IPR002493">
    <property type="entry name" value="Herpes_UL25"/>
</dbReference>
<dbReference type="Pfam" id="PF01499">
    <property type="entry name" value="Herpes_UL25"/>
    <property type="match status" value="1"/>
</dbReference>
<keyword id="KW-0002">3D-structure</keyword>
<keyword id="KW-0167">Capsid protein</keyword>
<keyword id="KW-1048">Host nucleus</keyword>
<keyword id="KW-0945">Host-virus interaction</keyword>
<keyword id="KW-1185">Reference proteome</keyword>
<keyword id="KW-0231">Viral genome packaging</keyword>
<keyword id="KW-1163">Viral penetration into host nucleus</keyword>
<keyword id="KW-1188">Viral release from host cell</keyword>
<keyword id="KW-0946">Virion</keyword>
<keyword id="KW-1160">Virus entry into host cell</keyword>
<reference key="1">
    <citation type="journal article" date="1991" name="J. Gen. Virol.">
        <title>Comparative sequence analysis of the long repeat regions and adjoining parts of the long unique regions in the genomes of herpes simplex viruses types 1 and 2.</title>
        <authorList>
            <person name="McGeoch D.J."/>
            <person name="Cunningham C."/>
            <person name="McIntyre G."/>
            <person name="Dolan A."/>
        </authorList>
    </citation>
    <scope>NUCLEOTIDE SEQUENCE [LARGE SCALE GENOMIC DNA]</scope>
</reference>